<dbReference type="EMBL" id="CP000903">
    <property type="protein sequence ID" value="ABY45427.1"/>
    <property type="molecule type" value="Genomic_DNA"/>
</dbReference>
<dbReference type="RefSeq" id="WP_002088786.1">
    <property type="nucleotide sequence ID" value="NC_010184.1"/>
</dbReference>
<dbReference type="SMR" id="A9VIP7"/>
<dbReference type="GeneID" id="66266010"/>
<dbReference type="KEGG" id="bwe:BcerKBAB4_4268"/>
<dbReference type="eggNOG" id="COG0632">
    <property type="taxonomic scope" value="Bacteria"/>
</dbReference>
<dbReference type="HOGENOM" id="CLU_087936_1_0_9"/>
<dbReference type="Proteomes" id="UP000002154">
    <property type="component" value="Chromosome"/>
</dbReference>
<dbReference type="GO" id="GO:0005737">
    <property type="term" value="C:cytoplasm"/>
    <property type="evidence" value="ECO:0007669"/>
    <property type="project" value="UniProtKB-SubCell"/>
</dbReference>
<dbReference type="GO" id="GO:0009379">
    <property type="term" value="C:Holliday junction helicase complex"/>
    <property type="evidence" value="ECO:0007669"/>
    <property type="project" value="InterPro"/>
</dbReference>
<dbReference type="GO" id="GO:0048476">
    <property type="term" value="C:Holliday junction resolvase complex"/>
    <property type="evidence" value="ECO:0007669"/>
    <property type="project" value="UniProtKB-UniRule"/>
</dbReference>
<dbReference type="GO" id="GO:0005524">
    <property type="term" value="F:ATP binding"/>
    <property type="evidence" value="ECO:0007669"/>
    <property type="project" value="InterPro"/>
</dbReference>
<dbReference type="GO" id="GO:0000400">
    <property type="term" value="F:four-way junction DNA binding"/>
    <property type="evidence" value="ECO:0007669"/>
    <property type="project" value="UniProtKB-UniRule"/>
</dbReference>
<dbReference type="GO" id="GO:0009378">
    <property type="term" value="F:four-way junction helicase activity"/>
    <property type="evidence" value="ECO:0007669"/>
    <property type="project" value="InterPro"/>
</dbReference>
<dbReference type="GO" id="GO:0006310">
    <property type="term" value="P:DNA recombination"/>
    <property type="evidence" value="ECO:0007669"/>
    <property type="project" value="UniProtKB-UniRule"/>
</dbReference>
<dbReference type="GO" id="GO:0006281">
    <property type="term" value="P:DNA repair"/>
    <property type="evidence" value="ECO:0007669"/>
    <property type="project" value="UniProtKB-UniRule"/>
</dbReference>
<dbReference type="CDD" id="cd14332">
    <property type="entry name" value="UBA_RuvA_C"/>
    <property type="match status" value="1"/>
</dbReference>
<dbReference type="Gene3D" id="1.10.150.20">
    <property type="entry name" value="5' to 3' exonuclease, C-terminal subdomain"/>
    <property type="match status" value="1"/>
</dbReference>
<dbReference type="Gene3D" id="1.10.8.10">
    <property type="entry name" value="DNA helicase RuvA subunit, C-terminal domain"/>
    <property type="match status" value="1"/>
</dbReference>
<dbReference type="Gene3D" id="2.40.50.140">
    <property type="entry name" value="Nucleic acid-binding proteins"/>
    <property type="match status" value="1"/>
</dbReference>
<dbReference type="HAMAP" id="MF_00031">
    <property type="entry name" value="DNA_HJ_migration_RuvA"/>
    <property type="match status" value="1"/>
</dbReference>
<dbReference type="InterPro" id="IPR013849">
    <property type="entry name" value="DNA_helicase_Holl-junc_RuvA_I"/>
</dbReference>
<dbReference type="InterPro" id="IPR003583">
    <property type="entry name" value="Hlx-hairpin-Hlx_DNA-bd_motif"/>
</dbReference>
<dbReference type="InterPro" id="IPR012340">
    <property type="entry name" value="NA-bd_OB-fold"/>
</dbReference>
<dbReference type="InterPro" id="IPR000085">
    <property type="entry name" value="RuvA"/>
</dbReference>
<dbReference type="InterPro" id="IPR010994">
    <property type="entry name" value="RuvA_2-like"/>
</dbReference>
<dbReference type="InterPro" id="IPR011114">
    <property type="entry name" value="RuvA_C"/>
</dbReference>
<dbReference type="InterPro" id="IPR036267">
    <property type="entry name" value="RuvA_C_sf"/>
</dbReference>
<dbReference type="NCBIfam" id="TIGR00084">
    <property type="entry name" value="ruvA"/>
    <property type="match status" value="1"/>
</dbReference>
<dbReference type="Pfam" id="PF14520">
    <property type="entry name" value="HHH_5"/>
    <property type="match status" value="1"/>
</dbReference>
<dbReference type="Pfam" id="PF07499">
    <property type="entry name" value="RuvA_C"/>
    <property type="match status" value="1"/>
</dbReference>
<dbReference type="Pfam" id="PF01330">
    <property type="entry name" value="RuvA_N"/>
    <property type="match status" value="1"/>
</dbReference>
<dbReference type="SMART" id="SM00278">
    <property type="entry name" value="HhH1"/>
    <property type="match status" value="2"/>
</dbReference>
<dbReference type="SUPFAM" id="SSF46929">
    <property type="entry name" value="DNA helicase RuvA subunit, C-terminal domain"/>
    <property type="match status" value="1"/>
</dbReference>
<dbReference type="SUPFAM" id="SSF50249">
    <property type="entry name" value="Nucleic acid-binding proteins"/>
    <property type="match status" value="1"/>
</dbReference>
<dbReference type="SUPFAM" id="SSF47781">
    <property type="entry name" value="RuvA domain 2-like"/>
    <property type="match status" value="1"/>
</dbReference>
<feature type="chain" id="PRO_1000090281" description="Holliday junction branch migration complex subunit RuvA">
    <location>
        <begin position="1"/>
        <end position="205"/>
    </location>
</feature>
<feature type="region of interest" description="Domain I" evidence="1">
    <location>
        <begin position="1"/>
        <end position="62"/>
    </location>
</feature>
<feature type="region of interest" description="Domain II" evidence="1">
    <location>
        <begin position="63"/>
        <end position="141"/>
    </location>
</feature>
<feature type="region of interest" description="Flexible linker" evidence="1">
    <location>
        <begin position="142"/>
        <end position="152"/>
    </location>
</feature>
<feature type="region of interest" description="Domain III" evidence="1">
    <location>
        <begin position="153"/>
        <end position="205"/>
    </location>
</feature>
<organism>
    <name type="scientific">Bacillus mycoides (strain KBAB4)</name>
    <name type="common">Bacillus weihenstephanensis</name>
    <dbReference type="NCBI Taxonomy" id="315730"/>
    <lineage>
        <taxon>Bacteria</taxon>
        <taxon>Bacillati</taxon>
        <taxon>Bacillota</taxon>
        <taxon>Bacilli</taxon>
        <taxon>Bacillales</taxon>
        <taxon>Bacillaceae</taxon>
        <taxon>Bacillus</taxon>
        <taxon>Bacillus cereus group</taxon>
    </lineage>
</organism>
<accession>A9VIP7</accession>
<evidence type="ECO:0000255" key="1">
    <source>
        <dbReference type="HAMAP-Rule" id="MF_00031"/>
    </source>
</evidence>
<protein>
    <recommendedName>
        <fullName evidence="1">Holliday junction branch migration complex subunit RuvA</fullName>
    </recommendedName>
</protein>
<name>RUVA_BACMK</name>
<proteinExistence type="inferred from homology"/>
<reference key="1">
    <citation type="journal article" date="2008" name="Chem. Biol. Interact.">
        <title>Extending the Bacillus cereus group genomics to putative food-borne pathogens of different toxicity.</title>
        <authorList>
            <person name="Lapidus A."/>
            <person name="Goltsman E."/>
            <person name="Auger S."/>
            <person name="Galleron N."/>
            <person name="Segurens B."/>
            <person name="Dossat C."/>
            <person name="Land M.L."/>
            <person name="Broussolle V."/>
            <person name="Brillard J."/>
            <person name="Guinebretiere M.-H."/>
            <person name="Sanchis V."/>
            <person name="Nguen-the C."/>
            <person name="Lereclus D."/>
            <person name="Richardson P."/>
            <person name="Wincker P."/>
            <person name="Weissenbach J."/>
            <person name="Ehrlich S.D."/>
            <person name="Sorokin A."/>
        </authorList>
    </citation>
    <scope>NUCLEOTIDE SEQUENCE [LARGE SCALE GENOMIC DNA]</scope>
    <source>
        <strain>KBAB4</strain>
    </source>
</reference>
<comment type="function">
    <text evidence="1">The RuvA-RuvB-RuvC complex processes Holliday junction (HJ) DNA during genetic recombination and DNA repair, while the RuvA-RuvB complex plays an important role in the rescue of blocked DNA replication forks via replication fork reversal (RFR). RuvA specifically binds to HJ cruciform DNA, conferring on it an open structure. The RuvB hexamer acts as an ATP-dependent pump, pulling dsDNA into and through the RuvAB complex. HJ branch migration allows RuvC to scan DNA until it finds its consensus sequence, where it cleaves and resolves the cruciform DNA.</text>
</comment>
<comment type="subunit">
    <text evidence="1">Homotetramer. Forms an RuvA(8)-RuvB(12)-Holliday junction (HJ) complex. HJ DNA is sandwiched between 2 RuvA tetramers; dsDNA enters through RuvA and exits via RuvB. An RuvB hexamer assembles on each DNA strand where it exits the tetramer. Each RuvB hexamer is contacted by two RuvA subunits (via domain III) on 2 adjacent RuvB subunits; this complex drives branch migration. In the full resolvosome a probable DNA-RuvA(4)-RuvB(12)-RuvC(2) complex forms which resolves the HJ.</text>
</comment>
<comment type="subcellular location">
    <subcellularLocation>
        <location evidence="1">Cytoplasm</location>
    </subcellularLocation>
</comment>
<comment type="domain">
    <text evidence="1">Has three domains with a flexible linker between the domains II and III and assumes an 'L' shape. Domain III is highly mobile and contacts RuvB.</text>
</comment>
<comment type="similarity">
    <text evidence="1">Belongs to the RuvA family.</text>
</comment>
<sequence>MFEYVTGYVEYVGPEYVVIDHNGIGYQIFTPNPYVFQRSKQEIRVYTYHYVREDIMALYGFKTREERLLFTKLLGVSGIGPKGALAILASGQTGQVVQAIEHEDEKFLVKFPGVGKKTARQMILDLKGKLADVVPDAFVDLFSDTESFDTKKGSSVELDEALEALRALGYAEREVSRVVPELLKESLTTDQYIKKALSLLLNGKR</sequence>
<gene>
    <name evidence="1" type="primary">ruvA</name>
    <name type="ordered locus">BcerKBAB4_4268</name>
</gene>
<keyword id="KW-0963">Cytoplasm</keyword>
<keyword id="KW-0227">DNA damage</keyword>
<keyword id="KW-0233">DNA recombination</keyword>
<keyword id="KW-0234">DNA repair</keyword>
<keyword id="KW-0238">DNA-binding</keyword>